<sequence>MANLEKIVEDLSALTVLEAAELAKMLEEKWGVSAAAPVAVAAAGGAAPAAAAEEKTEFDVVLTEAGAKKIEVIKLVREVVPALGLKEAKDLVEGAPKTVKEAVSKADAEELKKKFEAAGAKVELK</sequence>
<protein>
    <recommendedName>
        <fullName evidence="1">Large ribosomal subunit protein bL12</fullName>
    </recommendedName>
    <alternativeName>
        <fullName evidence="2">50S ribosomal protein L7/L12</fullName>
    </alternativeName>
</protein>
<reference key="1">
    <citation type="journal article" date="2006" name="J. Bacteriol.">
        <title>Comparative genomic evidence for a close relationship between the dimorphic prosthecate bacteria Hyphomonas neptunium and Caulobacter crescentus.</title>
        <authorList>
            <person name="Badger J.H."/>
            <person name="Hoover T.R."/>
            <person name="Brun Y.V."/>
            <person name="Weiner R.M."/>
            <person name="Laub M.T."/>
            <person name="Alexandre G."/>
            <person name="Mrazek J."/>
            <person name="Ren Q."/>
            <person name="Paulsen I.T."/>
            <person name="Nelson K.E."/>
            <person name="Khouri H.M."/>
            <person name="Radune D."/>
            <person name="Sosa J."/>
            <person name="Dodson R.J."/>
            <person name="Sullivan S.A."/>
            <person name="Rosovitz M.J."/>
            <person name="Madupu R."/>
            <person name="Brinkac L.M."/>
            <person name="Durkin A.S."/>
            <person name="Daugherty S.C."/>
            <person name="Kothari S.P."/>
            <person name="Giglio M.G."/>
            <person name="Zhou L."/>
            <person name="Haft D.H."/>
            <person name="Selengut J.D."/>
            <person name="Davidsen T.M."/>
            <person name="Yang Q."/>
            <person name="Zafar N."/>
            <person name="Ward N.L."/>
        </authorList>
    </citation>
    <scope>NUCLEOTIDE SEQUENCE [LARGE SCALE GENOMIC DNA]</scope>
    <source>
        <strain>ATCC 15444</strain>
    </source>
</reference>
<name>RL7_HYPNA</name>
<gene>
    <name evidence="1" type="primary">rplL</name>
    <name type="ordered locus">HNE_2859</name>
</gene>
<dbReference type="EMBL" id="CP000158">
    <property type="protein sequence ID" value="ABI76664.1"/>
    <property type="molecule type" value="Genomic_DNA"/>
</dbReference>
<dbReference type="RefSeq" id="WP_011647834.1">
    <property type="nucleotide sequence ID" value="NC_008358.1"/>
</dbReference>
<dbReference type="SMR" id="Q0BYA6"/>
<dbReference type="STRING" id="228405.HNE_2859"/>
<dbReference type="KEGG" id="hne:HNE_2859"/>
<dbReference type="eggNOG" id="COG0222">
    <property type="taxonomic scope" value="Bacteria"/>
</dbReference>
<dbReference type="HOGENOM" id="CLU_086499_3_0_5"/>
<dbReference type="Proteomes" id="UP000001959">
    <property type="component" value="Chromosome"/>
</dbReference>
<dbReference type="GO" id="GO:0005737">
    <property type="term" value="C:cytoplasm"/>
    <property type="evidence" value="ECO:0007669"/>
    <property type="project" value="UniProtKB-ARBA"/>
</dbReference>
<dbReference type="GO" id="GO:1990904">
    <property type="term" value="C:ribonucleoprotein complex"/>
    <property type="evidence" value="ECO:0007669"/>
    <property type="project" value="UniProtKB-KW"/>
</dbReference>
<dbReference type="GO" id="GO:0005840">
    <property type="term" value="C:ribosome"/>
    <property type="evidence" value="ECO:0007669"/>
    <property type="project" value="UniProtKB-KW"/>
</dbReference>
<dbReference type="GO" id="GO:0003729">
    <property type="term" value="F:mRNA binding"/>
    <property type="evidence" value="ECO:0007669"/>
    <property type="project" value="TreeGrafter"/>
</dbReference>
<dbReference type="GO" id="GO:0003735">
    <property type="term" value="F:structural constituent of ribosome"/>
    <property type="evidence" value="ECO:0007669"/>
    <property type="project" value="InterPro"/>
</dbReference>
<dbReference type="GO" id="GO:0006412">
    <property type="term" value="P:translation"/>
    <property type="evidence" value="ECO:0007669"/>
    <property type="project" value="UniProtKB-UniRule"/>
</dbReference>
<dbReference type="CDD" id="cd00387">
    <property type="entry name" value="Ribosomal_L7_L12"/>
    <property type="match status" value="1"/>
</dbReference>
<dbReference type="FunFam" id="1.20.5.710:FF:000007">
    <property type="entry name" value="50S ribosomal protein L7/L12"/>
    <property type="match status" value="1"/>
</dbReference>
<dbReference type="FunFam" id="3.30.1390.10:FF:000001">
    <property type="entry name" value="50S ribosomal protein L7/L12"/>
    <property type="match status" value="1"/>
</dbReference>
<dbReference type="Gene3D" id="3.30.1390.10">
    <property type="match status" value="1"/>
</dbReference>
<dbReference type="Gene3D" id="1.20.5.710">
    <property type="entry name" value="Single helix bin"/>
    <property type="match status" value="1"/>
</dbReference>
<dbReference type="HAMAP" id="MF_00368">
    <property type="entry name" value="Ribosomal_bL12"/>
    <property type="match status" value="1"/>
</dbReference>
<dbReference type="InterPro" id="IPR000206">
    <property type="entry name" value="Ribosomal_bL12"/>
</dbReference>
<dbReference type="InterPro" id="IPR013823">
    <property type="entry name" value="Ribosomal_bL12_C"/>
</dbReference>
<dbReference type="InterPro" id="IPR014719">
    <property type="entry name" value="Ribosomal_bL12_C/ClpS-like"/>
</dbReference>
<dbReference type="InterPro" id="IPR008932">
    <property type="entry name" value="Ribosomal_bL12_oligo"/>
</dbReference>
<dbReference type="InterPro" id="IPR036235">
    <property type="entry name" value="Ribosomal_bL12_oligo_N_sf"/>
</dbReference>
<dbReference type="NCBIfam" id="TIGR00855">
    <property type="entry name" value="L12"/>
    <property type="match status" value="1"/>
</dbReference>
<dbReference type="PANTHER" id="PTHR45987">
    <property type="entry name" value="39S RIBOSOMAL PROTEIN L12"/>
    <property type="match status" value="1"/>
</dbReference>
<dbReference type="PANTHER" id="PTHR45987:SF4">
    <property type="entry name" value="LARGE RIBOSOMAL SUBUNIT PROTEIN BL12M"/>
    <property type="match status" value="1"/>
</dbReference>
<dbReference type="Pfam" id="PF00542">
    <property type="entry name" value="Ribosomal_L12"/>
    <property type="match status" value="1"/>
</dbReference>
<dbReference type="Pfam" id="PF16320">
    <property type="entry name" value="Ribosomal_L12_N"/>
    <property type="match status" value="1"/>
</dbReference>
<dbReference type="SUPFAM" id="SSF54736">
    <property type="entry name" value="ClpS-like"/>
    <property type="match status" value="1"/>
</dbReference>
<dbReference type="SUPFAM" id="SSF48300">
    <property type="entry name" value="Ribosomal protein L7/12, oligomerisation (N-terminal) domain"/>
    <property type="match status" value="1"/>
</dbReference>
<keyword id="KW-1185">Reference proteome</keyword>
<keyword id="KW-0687">Ribonucleoprotein</keyword>
<keyword id="KW-0689">Ribosomal protein</keyword>
<evidence type="ECO:0000255" key="1">
    <source>
        <dbReference type="HAMAP-Rule" id="MF_00368"/>
    </source>
</evidence>
<evidence type="ECO:0000305" key="2"/>
<comment type="function">
    <text evidence="1">Forms part of the ribosomal stalk which helps the ribosome interact with GTP-bound translation factors. Is thus essential for accurate translation.</text>
</comment>
<comment type="subunit">
    <text evidence="1">Homodimer. Part of the ribosomal stalk of the 50S ribosomal subunit. Forms a multimeric L10(L12)X complex, where L10 forms an elongated spine to which 2 to 4 L12 dimers bind in a sequential fashion. Binds GTP-bound translation factors.</text>
</comment>
<comment type="similarity">
    <text evidence="1">Belongs to the bacterial ribosomal protein bL12 family.</text>
</comment>
<feature type="chain" id="PRO_1000007022" description="Large ribosomal subunit protein bL12">
    <location>
        <begin position="1"/>
        <end position="125"/>
    </location>
</feature>
<proteinExistence type="inferred from homology"/>
<accession>Q0BYA6</accession>
<organism>
    <name type="scientific">Hyphomonas neptunium (strain ATCC 15444)</name>
    <dbReference type="NCBI Taxonomy" id="228405"/>
    <lineage>
        <taxon>Bacteria</taxon>
        <taxon>Pseudomonadati</taxon>
        <taxon>Pseudomonadota</taxon>
        <taxon>Alphaproteobacteria</taxon>
        <taxon>Hyphomonadales</taxon>
        <taxon>Hyphomonadaceae</taxon>
        <taxon>Hyphomonas</taxon>
    </lineage>
</organism>